<name>ATPB_BRIAM</name>
<comment type="function">
    <text evidence="1">Produces ATP from ADP in the presence of a proton gradient across the membrane. The catalytic sites are hosted primarily by the beta subunits.</text>
</comment>
<comment type="catalytic activity">
    <reaction evidence="1">
        <text>ATP + H2O + 4 H(+)(in) = ADP + phosphate + 5 H(+)(out)</text>
        <dbReference type="Rhea" id="RHEA:57720"/>
        <dbReference type="ChEBI" id="CHEBI:15377"/>
        <dbReference type="ChEBI" id="CHEBI:15378"/>
        <dbReference type="ChEBI" id="CHEBI:30616"/>
        <dbReference type="ChEBI" id="CHEBI:43474"/>
        <dbReference type="ChEBI" id="CHEBI:456216"/>
        <dbReference type="EC" id="7.1.2.2"/>
    </reaction>
</comment>
<comment type="subunit">
    <text evidence="1">F-type ATPases have 2 components, CF(1) - the catalytic core - and CF(0) - the membrane proton channel. CF(1) has five subunits: alpha(3), beta(3), gamma(1), delta(1), epsilon(1). CF(0) has four main subunits: a(1), b(1), b'(1) and c(9-12).</text>
</comment>
<comment type="subcellular location">
    <subcellularLocation>
        <location evidence="1">Plastid</location>
        <location evidence="1">Chloroplast thylakoid membrane</location>
        <topology evidence="1">Peripheral membrane protein</topology>
    </subcellularLocation>
</comment>
<comment type="similarity">
    <text evidence="1">Belongs to the ATPase alpha/beta chains family.</text>
</comment>
<keyword id="KW-0066">ATP synthesis</keyword>
<keyword id="KW-0067">ATP-binding</keyword>
<keyword id="KW-0139">CF(1)</keyword>
<keyword id="KW-0150">Chloroplast</keyword>
<keyword id="KW-0375">Hydrogen ion transport</keyword>
<keyword id="KW-0406">Ion transport</keyword>
<keyword id="KW-0472">Membrane</keyword>
<keyword id="KW-0547">Nucleotide-binding</keyword>
<keyword id="KW-0934">Plastid</keyword>
<keyword id="KW-0793">Thylakoid</keyword>
<keyword id="KW-1278">Translocase</keyword>
<keyword id="KW-0813">Transport</keyword>
<organism>
    <name type="scientific">Brimeura amethystina</name>
    <name type="common">Spanish hyacinth</name>
    <name type="synonym">Hyacinthus amethystinus</name>
    <dbReference type="NCBI Taxonomy" id="81741"/>
    <lineage>
        <taxon>Eukaryota</taxon>
        <taxon>Viridiplantae</taxon>
        <taxon>Streptophyta</taxon>
        <taxon>Embryophyta</taxon>
        <taxon>Tracheophyta</taxon>
        <taxon>Spermatophyta</taxon>
        <taxon>Magnoliopsida</taxon>
        <taxon>Liliopsida</taxon>
        <taxon>Asparagales</taxon>
        <taxon>Hyacinthaceae</taxon>
        <taxon>Hyacinthoideae</taxon>
        <taxon>Hyacintheae</taxon>
        <taxon>Brimeura</taxon>
    </lineage>
</organism>
<dbReference type="EC" id="7.1.2.2" evidence="1"/>
<dbReference type="EMBL" id="AJ508216">
    <property type="protein sequence ID" value="CAD48413.1"/>
    <property type="molecule type" value="Genomic_DNA"/>
</dbReference>
<dbReference type="SMR" id="Q85V27"/>
<dbReference type="GO" id="GO:0009535">
    <property type="term" value="C:chloroplast thylakoid membrane"/>
    <property type="evidence" value="ECO:0007669"/>
    <property type="project" value="UniProtKB-SubCell"/>
</dbReference>
<dbReference type="GO" id="GO:0005739">
    <property type="term" value="C:mitochondrion"/>
    <property type="evidence" value="ECO:0007669"/>
    <property type="project" value="GOC"/>
</dbReference>
<dbReference type="GO" id="GO:0045259">
    <property type="term" value="C:proton-transporting ATP synthase complex"/>
    <property type="evidence" value="ECO:0007669"/>
    <property type="project" value="UniProtKB-KW"/>
</dbReference>
<dbReference type="GO" id="GO:0005524">
    <property type="term" value="F:ATP binding"/>
    <property type="evidence" value="ECO:0007669"/>
    <property type="project" value="UniProtKB-UniRule"/>
</dbReference>
<dbReference type="GO" id="GO:0016887">
    <property type="term" value="F:ATP hydrolysis activity"/>
    <property type="evidence" value="ECO:0007669"/>
    <property type="project" value="InterPro"/>
</dbReference>
<dbReference type="GO" id="GO:0046933">
    <property type="term" value="F:proton-transporting ATP synthase activity, rotational mechanism"/>
    <property type="evidence" value="ECO:0007669"/>
    <property type="project" value="UniProtKB-UniRule"/>
</dbReference>
<dbReference type="GO" id="GO:0042776">
    <property type="term" value="P:proton motive force-driven mitochondrial ATP synthesis"/>
    <property type="evidence" value="ECO:0007669"/>
    <property type="project" value="TreeGrafter"/>
</dbReference>
<dbReference type="CDD" id="cd18110">
    <property type="entry name" value="ATP-synt_F1_beta_C"/>
    <property type="match status" value="1"/>
</dbReference>
<dbReference type="CDD" id="cd18115">
    <property type="entry name" value="ATP-synt_F1_beta_N"/>
    <property type="match status" value="1"/>
</dbReference>
<dbReference type="CDD" id="cd01133">
    <property type="entry name" value="F1-ATPase_beta_CD"/>
    <property type="match status" value="1"/>
</dbReference>
<dbReference type="FunFam" id="1.10.1140.10:FF:000001">
    <property type="entry name" value="ATP synthase subunit beta"/>
    <property type="match status" value="1"/>
</dbReference>
<dbReference type="FunFam" id="3.40.50.300:FF:000004">
    <property type="entry name" value="ATP synthase subunit beta"/>
    <property type="match status" value="1"/>
</dbReference>
<dbReference type="FunFam" id="2.40.10.170:FF:000002">
    <property type="entry name" value="ATP synthase subunit beta, chloroplastic"/>
    <property type="match status" value="1"/>
</dbReference>
<dbReference type="Gene3D" id="2.40.10.170">
    <property type="match status" value="1"/>
</dbReference>
<dbReference type="Gene3D" id="1.10.1140.10">
    <property type="entry name" value="Bovine Mitochondrial F1-atpase, Atp Synthase Beta Chain, Chain D, domain 3"/>
    <property type="match status" value="1"/>
</dbReference>
<dbReference type="Gene3D" id="3.40.50.300">
    <property type="entry name" value="P-loop containing nucleotide triphosphate hydrolases"/>
    <property type="match status" value="1"/>
</dbReference>
<dbReference type="HAMAP" id="MF_01347">
    <property type="entry name" value="ATP_synth_beta_bact"/>
    <property type="match status" value="1"/>
</dbReference>
<dbReference type="InterPro" id="IPR003593">
    <property type="entry name" value="AAA+_ATPase"/>
</dbReference>
<dbReference type="InterPro" id="IPR055190">
    <property type="entry name" value="ATP-synt_VA_C"/>
</dbReference>
<dbReference type="InterPro" id="IPR005722">
    <property type="entry name" value="ATP_synth_F1_bsu"/>
</dbReference>
<dbReference type="InterPro" id="IPR020003">
    <property type="entry name" value="ATPase_a/bsu_AS"/>
</dbReference>
<dbReference type="InterPro" id="IPR050053">
    <property type="entry name" value="ATPase_alpha/beta_chains"/>
</dbReference>
<dbReference type="InterPro" id="IPR004100">
    <property type="entry name" value="ATPase_F1/V1/A1_a/bsu_N"/>
</dbReference>
<dbReference type="InterPro" id="IPR036121">
    <property type="entry name" value="ATPase_F1/V1/A1_a/bsu_N_sf"/>
</dbReference>
<dbReference type="InterPro" id="IPR000194">
    <property type="entry name" value="ATPase_F1/V1/A1_a/bsu_nucl-bd"/>
</dbReference>
<dbReference type="InterPro" id="IPR024034">
    <property type="entry name" value="ATPase_F1/V1_b/a_C"/>
</dbReference>
<dbReference type="InterPro" id="IPR027417">
    <property type="entry name" value="P-loop_NTPase"/>
</dbReference>
<dbReference type="NCBIfam" id="TIGR01039">
    <property type="entry name" value="atpD"/>
    <property type="match status" value="1"/>
</dbReference>
<dbReference type="PANTHER" id="PTHR15184">
    <property type="entry name" value="ATP SYNTHASE"/>
    <property type="match status" value="1"/>
</dbReference>
<dbReference type="PANTHER" id="PTHR15184:SF71">
    <property type="entry name" value="ATP SYNTHASE SUBUNIT BETA, MITOCHONDRIAL"/>
    <property type="match status" value="1"/>
</dbReference>
<dbReference type="Pfam" id="PF00006">
    <property type="entry name" value="ATP-synt_ab"/>
    <property type="match status" value="1"/>
</dbReference>
<dbReference type="Pfam" id="PF02874">
    <property type="entry name" value="ATP-synt_ab_N"/>
    <property type="match status" value="1"/>
</dbReference>
<dbReference type="Pfam" id="PF22919">
    <property type="entry name" value="ATP-synt_VA_C"/>
    <property type="match status" value="1"/>
</dbReference>
<dbReference type="SMART" id="SM00382">
    <property type="entry name" value="AAA"/>
    <property type="match status" value="1"/>
</dbReference>
<dbReference type="SUPFAM" id="SSF47917">
    <property type="entry name" value="C-terminal domain of alpha and beta subunits of F1 ATP synthase"/>
    <property type="match status" value="1"/>
</dbReference>
<dbReference type="SUPFAM" id="SSF50615">
    <property type="entry name" value="N-terminal domain of alpha and beta subunits of F1 ATP synthase"/>
    <property type="match status" value="1"/>
</dbReference>
<dbReference type="SUPFAM" id="SSF52540">
    <property type="entry name" value="P-loop containing nucleoside triphosphate hydrolases"/>
    <property type="match status" value="1"/>
</dbReference>
<dbReference type="PROSITE" id="PS00152">
    <property type="entry name" value="ATPASE_ALPHA_BETA"/>
    <property type="match status" value="1"/>
</dbReference>
<proteinExistence type="inferred from homology"/>
<protein>
    <recommendedName>
        <fullName evidence="1">ATP synthase subunit beta, chloroplastic</fullName>
        <ecNumber evidence="1">7.1.2.2</ecNumber>
    </recommendedName>
    <alternativeName>
        <fullName evidence="1">ATP synthase F1 sector subunit beta</fullName>
    </alternativeName>
    <alternativeName>
        <fullName evidence="1">F-ATPase subunit beta</fullName>
    </alternativeName>
</protein>
<sequence length="495" mass="53331">MRINPTTSSSAVSTLEEKNLGRIAQIIGPVLDVVFPPGKMPNIYNALVVKGRDTVGQQINVICEVQQLLGNNRVRAVAMSATDGLTRGMEVIDTGAALSVPVGGATLGRIFNVLGEPVDNLGPVDTRTTSPIHRSAPAFIQLDTKLSIFETGIKVVDLLAPYRRGGKIGLFGGAGVGKTVLIMELINNIAKAHGGVSVFGGVGERTREGNDLYMEMKESGVINEKNIAESKVALVYGQMNEPPGARMRVGLTALTMAEYFRDVNEQDVLLFIDNIFRFVQAGSEVSALLGRMPSAVGYQPTLSTEMGSLQERITSTKEGSITSIQAVYVPADDLTDPAPATTFAHLDATTVLSRGLAAKGIYPAVDPLDSTSTMLQPRIVGEEHYETAQKVKQTLQRYKELQDIIAILGLDELSEEDRLTVARARKIERFLSQPFFVAEVFTGSPGKYVGLAETIRGFQLILSGELDSLPEQAFYLVGNIDEATAKAMNLEGEKK</sequence>
<accession>Q85V27</accession>
<reference key="1">
    <citation type="journal article" date="2003" name="J. Plant Res.">
        <title>Phylogenetic relationships among genera of Massonieae (Hyacinthaceae) inferred from plastid DNA and seed morphology.</title>
        <authorList>
            <person name="Pfosser M.F."/>
            <person name="Wetschnig W."/>
            <person name="Ungar S."/>
            <person name="Prenner G."/>
        </authorList>
    </citation>
    <scope>NUCLEOTIDE SEQUENCE [GENOMIC DNA]</scope>
</reference>
<evidence type="ECO:0000255" key="1">
    <source>
        <dbReference type="HAMAP-Rule" id="MF_01347"/>
    </source>
</evidence>
<feature type="chain" id="PRO_0000254450" description="ATP synthase subunit beta, chloroplastic">
    <location>
        <begin position="1"/>
        <end position="495"/>
    </location>
</feature>
<feature type="binding site" evidence="1">
    <location>
        <begin position="172"/>
        <end position="179"/>
    </location>
    <ligand>
        <name>ATP</name>
        <dbReference type="ChEBI" id="CHEBI:30616"/>
    </ligand>
</feature>
<geneLocation type="chloroplast"/>
<gene>
    <name evidence="1" type="primary">atpB</name>
</gene>